<feature type="chain" id="PRO_0000380429" description="DNA ligase">
    <location>
        <begin position="1"/>
        <end position="663"/>
    </location>
</feature>
<feature type="domain" description="BRCT" evidence="1">
    <location>
        <begin position="587"/>
        <end position="663"/>
    </location>
</feature>
<feature type="active site" description="N6-AMP-lysine intermediate" evidence="1">
    <location>
        <position position="115"/>
    </location>
</feature>
<feature type="binding site" evidence="1">
    <location>
        <begin position="33"/>
        <end position="37"/>
    </location>
    <ligand>
        <name>NAD(+)</name>
        <dbReference type="ChEBI" id="CHEBI:57540"/>
    </ligand>
</feature>
<feature type="binding site" evidence="1">
    <location>
        <begin position="82"/>
        <end position="83"/>
    </location>
    <ligand>
        <name>NAD(+)</name>
        <dbReference type="ChEBI" id="CHEBI:57540"/>
    </ligand>
</feature>
<feature type="binding site" evidence="1">
    <location>
        <position position="113"/>
    </location>
    <ligand>
        <name>NAD(+)</name>
        <dbReference type="ChEBI" id="CHEBI:57540"/>
    </ligand>
</feature>
<feature type="binding site" evidence="1">
    <location>
        <position position="136"/>
    </location>
    <ligand>
        <name>NAD(+)</name>
        <dbReference type="ChEBI" id="CHEBI:57540"/>
    </ligand>
</feature>
<feature type="binding site" evidence="1">
    <location>
        <position position="170"/>
    </location>
    <ligand>
        <name>NAD(+)</name>
        <dbReference type="ChEBI" id="CHEBI:57540"/>
    </ligand>
</feature>
<feature type="binding site" evidence="1">
    <location>
        <position position="286"/>
    </location>
    <ligand>
        <name>NAD(+)</name>
        <dbReference type="ChEBI" id="CHEBI:57540"/>
    </ligand>
</feature>
<feature type="binding site" evidence="1">
    <location>
        <position position="310"/>
    </location>
    <ligand>
        <name>NAD(+)</name>
        <dbReference type="ChEBI" id="CHEBI:57540"/>
    </ligand>
</feature>
<feature type="binding site" evidence="1">
    <location>
        <position position="404"/>
    </location>
    <ligand>
        <name>Zn(2+)</name>
        <dbReference type="ChEBI" id="CHEBI:29105"/>
    </ligand>
</feature>
<feature type="binding site" evidence="1">
    <location>
        <position position="407"/>
    </location>
    <ligand>
        <name>Zn(2+)</name>
        <dbReference type="ChEBI" id="CHEBI:29105"/>
    </ligand>
</feature>
<feature type="binding site" evidence="1">
    <location>
        <position position="422"/>
    </location>
    <ligand>
        <name>Zn(2+)</name>
        <dbReference type="ChEBI" id="CHEBI:29105"/>
    </ligand>
</feature>
<feature type="binding site" evidence="1">
    <location>
        <position position="427"/>
    </location>
    <ligand>
        <name>Zn(2+)</name>
        <dbReference type="ChEBI" id="CHEBI:29105"/>
    </ligand>
</feature>
<reference key="1">
    <citation type="submission" date="2008-04" db="EMBL/GenBank/DDBJ databases">
        <title>Complete sequence of chromosome of Natranaerobius thermophilus JW/NM-WN-LF.</title>
        <authorList>
            <consortium name="US DOE Joint Genome Institute"/>
            <person name="Copeland A."/>
            <person name="Lucas S."/>
            <person name="Lapidus A."/>
            <person name="Glavina del Rio T."/>
            <person name="Dalin E."/>
            <person name="Tice H."/>
            <person name="Bruce D."/>
            <person name="Goodwin L."/>
            <person name="Pitluck S."/>
            <person name="Chertkov O."/>
            <person name="Brettin T."/>
            <person name="Detter J.C."/>
            <person name="Han C."/>
            <person name="Kuske C.R."/>
            <person name="Schmutz J."/>
            <person name="Larimer F."/>
            <person name="Land M."/>
            <person name="Hauser L."/>
            <person name="Kyrpides N."/>
            <person name="Lykidis A."/>
            <person name="Mesbah N.M."/>
            <person name="Wiegel J."/>
        </authorList>
    </citation>
    <scope>NUCLEOTIDE SEQUENCE [LARGE SCALE GENOMIC DNA]</scope>
    <source>
        <strain>ATCC BAA-1301 / DSM 18059 / JW/NM-WN-LF</strain>
    </source>
</reference>
<protein>
    <recommendedName>
        <fullName evidence="1">DNA ligase</fullName>
        <ecNumber evidence="1">6.5.1.2</ecNumber>
    </recommendedName>
    <alternativeName>
        <fullName evidence="1">Polydeoxyribonucleotide synthase [NAD(+)]</fullName>
    </alternativeName>
</protein>
<name>DNLJ_NATTJ</name>
<gene>
    <name evidence="1" type="primary">ligA</name>
    <name type="ordered locus">Nther_0462</name>
</gene>
<evidence type="ECO:0000255" key="1">
    <source>
        <dbReference type="HAMAP-Rule" id="MF_01588"/>
    </source>
</evidence>
<dbReference type="EC" id="6.5.1.2" evidence="1"/>
<dbReference type="EMBL" id="CP001034">
    <property type="protein sequence ID" value="ACB84058.1"/>
    <property type="molecule type" value="Genomic_DNA"/>
</dbReference>
<dbReference type="RefSeq" id="WP_012446945.1">
    <property type="nucleotide sequence ID" value="NZ_CP144221.1"/>
</dbReference>
<dbReference type="SMR" id="B2A5W5"/>
<dbReference type="FunCoup" id="B2A5W5">
    <property type="interactions" value="321"/>
</dbReference>
<dbReference type="STRING" id="457570.Nther_0462"/>
<dbReference type="KEGG" id="nth:Nther_0462"/>
<dbReference type="eggNOG" id="COG0272">
    <property type="taxonomic scope" value="Bacteria"/>
</dbReference>
<dbReference type="HOGENOM" id="CLU_007764_2_1_9"/>
<dbReference type="InParanoid" id="B2A5W5"/>
<dbReference type="OrthoDB" id="9759736at2"/>
<dbReference type="Proteomes" id="UP000001683">
    <property type="component" value="Chromosome"/>
</dbReference>
<dbReference type="GO" id="GO:0005829">
    <property type="term" value="C:cytosol"/>
    <property type="evidence" value="ECO:0007669"/>
    <property type="project" value="TreeGrafter"/>
</dbReference>
<dbReference type="GO" id="GO:0003677">
    <property type="term" value="F:DNA binding"/>
    <property type="evidence" value="ECO:0007669"/>
    <property type="project" value="InterPro"/>
</dbReference>
<dbReference type="GO" id="GO:0003911">
    <property type="term" value="F:DNA ligase (NAD+) activity"/>
    <property type="evidence" value="ECO:0007669"/>
    <property type="project" value="UniProtKB-UniRule"/>
</dbReference>
<dbReference type="GO" id="GO:0046872">
    <property type="term" value="F:metal ion binding"/>
    <property type="evidence" value="ECO:0007669"/>
    <property type="project" value="UniProtKB-KW"/>
</dbReference>
<dbReference type="GO" id="GO:0006281">
    <property type="term" value="P:DNA repair"/>
    <property type="evidence" value="ECO:0007669"/>
    <property type="project" value="UniProtKB-KW"/>
</dbReference>
<dbReference type="GO" id="GO:0006260">
    <property type="term" value="P:DNA replication"/>
    <property type="evidence" value="ECO:0007669"/>
    <property type="project" value="UniProtKB-KW"/>
</dbReference>
<dbReference type="CDD" id="cd17748">
    <property type="entry name" value="BRCT_DNA_ligase_like"/>
    <property type="match status" value="1"/>
</dbReference>
<dbReference type="CDD" id="cd00114">
    <property type="entry name" value="LIGANc"/>
    <property type="match status" value="1"/>
</dbReference>
<dbReference type="FunFam" id="1.10.150.20:FF:000006">
    <property type="entry name" value="DNA ligase"/>
    <property type="match status" value="1"/>
</dbReference>
<dbReference type="FunFam" id="1.10.150.20:FF:000007">
    <property type="entry name" value="DNA ligase"/>
    <property type="match status" value="1"/>
</dbReference>
<dbReference type="FunFam" id="1.10.287.610:FF:000002">
    <property type="entry name" value="DNA ligase"/>
    <property type="match status" value="1"/>
</dbReference>
<dbReference type="FunFam" id="2.40.50.140:FF:000012">
    <property type="entry name" value="DNA ligase"/>
    <property type="match status" value="1"/>
</dbReference>
<dbReference type="FunFam" id="3.30.470.30:FF:000001">
    <property type="entry name" value="DNA ligase"/>
    <property type="match status" value="1"/>
</dbReference>
<dbReference type="Gene3D" id="6.20.10.30">
    <property type="match status" value="1"/>
</dbReference>
<dbReference type="Gene3D" id="1.10.150.20">
    <property type="entry name" value="5' to 3' exonuclease, C-terminal subdomain"/>
    <property type="match status" value="2"/>
</dbReference>
<dbReference type="Gene3D" id="3.40.50.10190">
    <property type="entry name" value="BRCT domain"/>
    <property type="match status" value="1"/>
</dbReference>
<dbReference type="Gene3D" id="3.30.470.30">
    <property type="entry name" value="DNA ligase/mRNA capping enzyme"/>
    <property type="match status" value="1"/>
</dbReference>
<dbReference type="Gene3D" id="1.10.287.610">
    <property type="entry name" value="Helix hairpin bin"/>
    <property type="match status" value="1"/>
</dbReference>
<dbReference type="Gene3D" id="2.40.50.140">
    <property type="entry name" value="Nucleic acid-binding proteins"/>
    <property type="match status" value="1"/>
</dbReference>
<dbReference type="HAMAP" id="MF_01588">
    <property type="entry name" value="DNA_ligase_A"/>
    <property type="match status" value="1"/>
</dbReference>
<dbReference type="InterPro" id="IPR001357">
    <property type="entry name" value="BRCT_dom"/>
</dbReference>
<dbReference type="InterPro" id="IPR036420">
    <property type="entry name" value="BRCT_dom_sf"/>
</dbReference>
<dbReference type="InterPro" id="IPR041663">
    <property type="entry name" value="DisA/LigA_HHH"/>
</dbReference>
<dbReference type="InterPro" id="IPR001679">
    <property type="entry name" value="DNA_ligase"/>
</dbReference>
<dbReference type="InterPro" id="IPR018239">
    <property type="entry name" value="DNA_ligase_AS"/>
</dbReference>
<dbReference type="InterPro" id="IPR033136">
    <property type="entry name" value="DNA_ligase_CS"/>
</dbReference>
<dbReference type="InterPro" id="IPR013839">
    <property type="entry name" value="DNAligase_adenylation"/>
</dbReference>
<dbReference type="InterPro" id="IPR013840">
    <property type="entry name" value="DNAligase_N"/>
</dbReference>
<dbReference type="InterPro" id="IPR003583">
    <property type="entry name" value="Hlx-hairpin-Hlx_DNA-bd_motif"/>
</dbReference>
<dbReference type="InterPro" id="IPR012340">
    <property type="entry name" value="NA-bd_OB-fold"/>
</dbReference>
<dbReference type="InterPro" id="IPR004150">
    <property type="entry name" value="NAD_DNA_ligase_OB"/>
</dbReference>
<dbReference type="InterPro" id="IPR010994">
    <property type="entry name" value="RuvA_2-like"/>
</dbReference>
<dbReference type="InterPro" id="IPR004149">
    <property type="entry name" value="Znf_DNAligase_C4"/>
</dbReference>
<dbReference type="NCBIfam" id="TIGR00575">
    <property type="entry name" value="dnlj"/>
    <property type="match status" value="1"/>
</dbReference>
<dbReference type="NCBIfam" id="NF005932">
    <property type="entry name" value="PRK07956.1"/>
    <property type="match status" value="1"/>
</dbReference>
<dbReference type="PANTHER" id="PTHR23389">
    <property type="entry name" value="CHROMOSOME TRANSMISSION FIDELITY FACTOR 18"/>
    <property type="match status" value="1"/>
</dbReference>
<dbReference type="PANTHER" id="PTHR23389:SF9">
    <property type="entry name" value="DNA LIGASE"/>
    <property type="match status" value="1"/>
</dbReference>
<dbReference type="Pfam" id="PF00533">
    <property type="entry name" value="BRCT"/>
    <property type="match status" value="1"/>
</dbReference>
<dbReference type="Pfam" id="PF01653">
    <property type="entry name" value="DNA_ligase_aden"/>
    <property type="match status" value="1"/>
</dbReference>
<dbReference type="Pfam" id="PF03120">
    <property type="entry name" value="DNA_ligase_OB"/>
    <property type="match status" value="1"/>
</dbReference>
<dbReference type="Pfam" id="PF03119">
    <property type="entry name" value="DNA_ligase_ZBD"/>
    <property type="match status" value="1"/>
</dbReference>
<dbReference type="Pfam" id="PF12826">
    <property type="entry name" value="HHH_2"/>
    <property type="match status" value="1"/>
</dbReference>
<dbReference type="Pfam" id="PF14520">
    <property type="entry name" value="HHH_5"/>
    <property type="match status" value="1"/>
</dbReference>
<dbReference type="Pfam" id="PF22745">
    <property type="entry name" value="Nlig-Ia"/>
    <property type="match status" value="1"/>
</dbReference>
<dbReference type="PIRSF" id="PIRSF001604">
    <property type="entry name" value="LigA"/>
    <property type="match status" value="1"/>
</dbReference>
<dbReference type="SMART" id="SM00292">
    <property type="entry name" value="BRCT"/>
    <property type="match status" value="1"/>
</dbReference>
<dbReference type="SMART" id="SM00278">
    <property type="entry name" value="HhH1"/>
    <property type="match status" value="3"/>
</dbReference>
<dbReference type="SMART" id="SM00532">
    <property type="entry name" value="LIGANc"/>
    <property type="match status" value="1"/>
</dbReference>
<dbReference type="SUPFAM" id="SSF52113">
    <property type="entry name" value="BRCT domain"/>
    <property type="match status" value="1"/>
</dbReference>
<dbReference type="SUPFAM" id="SSF56091">
    <property type="entry name" value="DNA ligase/mRNA capping enzyme, catalytic domain"/>
    <property type="match status" value="1"/>
</dbReference>
<dbReference type="SUPFAM" id="SSF50249">
    <property type="entry name" value="Nucleic acid-binding proteins"/>
    <property type="match status" value="1"/>
</dbReference>
<dbReference type="SUPFAM" id="SSF47781">
    <property type="entry name" value="RuvA domain 2-like"/>
    <property type="match status" value="1"/>
</dbReference>
<dbReference type="PROSITE" id="PS50172">
    <property type="entry name" value="BRCT"/>
    <property type="match status" value="1"/>
</dbReference>
<dbReference type="PROSITE" id="PS01055">
    <property type="entry name" value="DNA_LIGASE_N1"/>
    <property type="match status" value="1"/>
</dbReference>
<dbReference type="PROSITE" id="PS01056">
    <property type="entry name" value="DNA_LIGASE_N2"/>
    <property type="match status" value="1"/>
</dbReference>
<sequence>MSKDIQKKVEALREKIEYHNHRYYVLDAPEISDQEFDALMNELIELEQTYPEYQSPDSPSQRVGGEPLDKFPRVSHEIPMLSLENAESQKGLLDFHQRVSKNTQKTDPVYVAELKIDGLALSLRYEQGILVRGATRGDGTTGEDITPNVKTVRSIPLKLSKPLDIEIRGEAFMSKASFERLNQEKAERGEDPFANPRNAAAGSLRQLDPKIPAKRDLDFFPYSVPYIRGENLDSHYSAVKELKDLGFKINPYIRKFETMEEVISYCEEWQEKRTKLPYEIDGVVIKLNDYNLQQQLGATSKNPRWAIAYKFPAEQAESQVNNIFINVGRTGALTPVVELEPVRIAGSTVKRASLHNEDILRQKDVRIGDRVIIQKAGDIIPEVVKVKEEARTGHEQPFVYPESCPVCKSEAKRINDEAILRCINPGCPAQAKERIIHFSSRDAMDIEGLGEKVVEKLYSHGLIKDVADIYYLAKNELSNLEGFGDKSAENLLQAIEESKKNPFNKLLYGLGIRLVGKRAAQLLAFEFEHLDNLMKAQIEDLTKINDIGPRMATSIVSFFQLEHTHNLIRKLKKAGVNMKEPTEQNKSSDPSLTGKLVVITGTFDNYTRRELTDLIEAKGAKVTSNVSSNTDFVLVGANPGSKRDKAQDLGLTIIEESDLEDFL</sequence>
<proteinExistence type="inferred from homology"/>
<keyword id="KW-0227">DNA damage</keyword>
<keyword id="KW-0234">DNA repair</keyword>
<keyword id="KW-0235">DNA replication</keyword>
<keyword id="KW-0436">Ligase</keyword>
<keyword id="KW-0460">Magnesium</keyword>
<keyword id="KW-0464">Manganese</keyword>
<keyword id="KW-0479">Metal-binding</keyword>
<keyword id="KW-0520">NAD</keyword>
<keyword id="KW-1185">Reference proteome</keyword>
<keyword id="KW-0862">Zinc</keyword>
<organism>
    <name type="scientific">Natranaerobius thermophilus (strain ATCC BAA-1301 / DSM 18059 / JW/NM-WN-LF)</name>
    <dbReference type="NCBI Taxonomy" id="457570"/>
    <lineage>
        <taxon>Bacteria</taxon>
        <taxon>Bacillati</taxon>
        <taxon>Bacillota</taxon>
        <taxon>Clostridia</taxon>
        <taxon>Natranaerobiales</taxon>
        <taxon>Natranaerobiaceae</taxon>
        <taxon>Natranaerobius</taxon>
    </lineage>
</organism>
<comment type="function">
    <text evidence="1">DNA ligase that catalyzes the formation of phosphodiester linkages between 5'-phosphoryl and 3'-hydroxyl groups in double-stranded DNA using NAD as a coenzyme and as the energy source for the reaction. It is essential for DNA replication and repair of damaged DNA.</text>
</comment>
<comment type="catalytic activity">
    <reaction evidence="1">
        <text>NAD(+) + (deoxyribonucleotide)n-3'-hydroxyl + 5'-phospho-(deoxyribonucleotide)m = (deoxyribonucleotide)n+m + AMP + beta-nicotinamide D-nucleotide.</text>
        <dbReference type="EC" id="6.5.1.2"/>
    </reaction>
</comment>
<comment type="cofactor">
    <cofactor evidence="1">
        <name>Mg(2+)</name>
        <dbReference type="ChEBI" id="CHEBI:18420"/>
    </cofactor>
    <cofactor evidence="1">
        <name>Mn(2+)</name>
        <dbReference type="ChEBI" id="CHEBI:29035"/>
    </cofactor>
</comment>
<comment type="similarity">
    <text evidence="1">Belongs to the NAD-dependent DNA ligase family. LigA subfamily.</text>
</comment>
<accession>B2A5W5</accession>